<proteinExistence type="inferred from homology"/>
<name>MGRB_SALSV</name>
<accession>B4TY09</accession>
<keyword id="KW-0997">Cell inner membrane</keyword>
<keyword id="KW-1003">Cell membrane</keyword>
<keyword id="KW-0472">Membrane</keyword>
<keyword id="KW-0812">Transmembrane</keyword>
<keyword id="KW-1133">Transmembrane helix</keyword>
<evidence type="ECO:0000255" key="1">
    <source>
        <dbReference type="HAMAP-Rule" id="MF_01596"/>
    </source>
</evidence>
<protein>
    <recommendedName>
        <fullName evidence="1">PhoP/PhoQ regulator MgrB</fullName>
    </recommendedName>
</protein>
<feature type="chain" id="PRO_1000201576" description="PhoP/PhoQ regulator MgrB">
    <location>
        <begin position="1"/>
        <end position="47"/>
    </location>
</feature>
<feature type="transmembrane region" description="Helical" evidence="1">
    <location>
        <begin position="6"/>
        <end position="26"/>
    </location>
</feature>
<comment type="function">
    <text evidence="1">PhoP-regulated transcription is redox-sensitive, being activated when the periplasm becomes more reducing. MgrB acts between DsbA/DsbB and PhoP/PhoQ in this pathway. Represses PhoP/PhoQ signaling, possibly by binding to the periplasmic domain of PhoQ, altering its activity and that of downstream effector PhoP.</text>
</comment>
<comment type="subunit">
    <text evidence="1">May form homooligomers. Probably interacts with the periplasmic domain of PhoQ.</text>
</comment>
<comment type="subcellular location">
    <subcellularLocation>
        <location evidence="1">Cell inner membrane</location>
        <topology evidence="1">Single-pass membrane protein</topology>
    </subcellularLocation>
</comment>
<comment type="similarity">
    <text evidence="1">Belongs to the MgrB family.</text>
</comment>
<reference key="1">
    <citation type="journal article" date="2011" name="J. Bacteriol.">
        <title>Comparative genomics of 28 Salmonella enterica isolates: evidence for CRISPR-mediated adaptive sublineage evolution.</title>
        <authorList>
            <person name="Fricke W.F."/>
            <person name="Mammel M.K."/>
            <person name="McDermott P.F."/>
            <person name="Tartera C."/>
            <person name="White D.G."/>
            <person name="Leclerc J.E."/>
            <person name="Ravel J."/>
            <person name="Cebula T.A."/>
        </authorList>
    </citation>
    <scope>NUCLEOTIDE SEQUENCE [LARGE SCALE GENOMIC DNA]</scope>
    <source>
        <strain>CVM19633</strain>
    </source>
</reference>
<sequence length="47" mass="5520">MKKFRWVVLGIVVVVCLLLWAQVFNIMCDQDVQFFSGICAINKFIPW</sequence>
<gene>
    <name evidence="1" type="primary">mgrB</name>
    <name type="ordered locus">SeSA_A1983</name>
</gene>
<organism>
    <name type="scientific">Salmonella schwarzengrund (strain CVM19633)</name>
    <dbReference type="NCBI Taxonomy" id="439843"/>
    <lineage>
        <taxon>Bacteria</taxon>
        <taxon>Pseudomonadati</taxon>
        <taxon>Pseudomonadota</taxon>
        <taxon>Gammaproteobacteria</taxon>
        <taxon>Enterobacterales</taxon>
        <taxon>Enterobacteriaceae</taxon>
        <taxon>Salmonella</taxon>
    </lineage>
</organism>
<dbReference type="EMBL" id="CP001127">
    <property type="protein sequence ID" value="ACF91070.1"/>
    <property type="molecule type" value="Genomic_DNA"/>
</dbReference>
<dbReference type="RefSeq" id="WP_000714547.1">
    <property type="nucleotide sequence ID" value="NC_011094.1"/>
</dbReference>
<dbReference type="GeneID" id="66756315"/>
<dbReference type="KEGG" id="sew:SeSA_A1983"/>
<dbReference type="HOGENOM" id="CLU_208030_1_0_6"/>
<dbReference type="Proteomes" id="UP000001865">
    <property type="component" value="Chromosome"/>
</dbReference>
<dbReference type="GO" id="GO:0005886">
    <property type="term" value="C:plasma membrane"/>
    <property type="evidence" value="ECO:0007669"/>
    <property type="project" value="UniProtKB-SubCell"/>
</dbReference>
<dbReference type="GO" id="GO:0070298">
    <property type="term" value="P:negative regulation of phosphorelay signal transduction system"/>
    <property type="evidence" value="ECO:0007669"/>
    <property type="project" value="UniProtKB-UniRule"/>
</dbReference>
<dbReference type="HAMAP" id="MF_01596">
    <property type="entry name" value="MgrB"/>
    <property type="match status" value="1"/>
</dbReference>
<dbReference type="InterPro" id="IPR020907">
    <property type="entry name" value="MgrB"/>
</dbReference>
<dbReference type="NCBIfam" id="NF007635">
    <property type="entry name" value="PRK10299.1"/>
    <property type="match status" value="1"/>
</dbReference>
<dbReference type="Pfam" id="PF13998">
    <property type="entry name" value="MgrB"/>
    <property type="match status" value="1"/>
</dbReference>